<organismHost>
    <name type="scientific">Aves</name>
    <dbReference type="NCBI Taxonomy" id="8782"/>
</organismHost>
<organismHost>
    <name type="scientific">Cetacea</name>
    <name type="common">whales</name>
    <dbReference type="NCBI Taxonomy" id="9721"/>
</organismHost>
<organismHost>
    <name type="scientific">Homo sapiens</name>
    <name type="common">Human</name>
    <dbReference type="NCBI Taxonomy" id="9606"/>
</organismHost>
<organismHost>
    <name type="scientific">Phocidae</name>
    <name type="common">true seals</name>
    <dbReference type="NCBI Taxonomy" id="9709"/>
</organismHost>
<organismHost>
    <name type="scientific">Sus scrofa</name>
    <name type="common">Pig</name>
    <dbReference type="NCBI Taxonomy" id="9823"/>
</organismHost>
<keyword id="KW-1157">Cap snatching</keyword>
<keyword id="KW-0255">Endonuclease</keyword>
<keyword id="KW-1262">Eukaryotic host gene expression shutoff by virus</keyword>
<keyword id="KW-1191">Eukaryotic host transcription shutoff by virus</keyword>
<keyword id="KW-1035">Host cytoplasm</keyword>
<keyword id="KW-1190">Host gene expression shutoff by virus</keyword>
<keyword id="KW-1048">Host nucleus</keyword>
<keyword id="KW-0945">Host-virus interaction</keyword>
<keyword id="KW-0378">Hydrolase</keyword>
<keyword id="KW-1104">Inhibition of host RNA polymerase II by virus</keyword>
<keyword id="KW-0464">Manganese</keyword>
<keyword id="KW-0479">Metal-binding</keyword>
<keyword id="KW-0540">Nuclease</keyword>
<keyword id="KW-0597">Phosphoprotein</keyword>
<keyword id="KW-0688">Ribosomal frameshifting</keyword>
<dbReference type="EC" id="3.1.-.-" evidence="2"/>
<dbReference type="EMBL" id="AY210201">
    <property type="protein sequence ID" value="AAO46515.1"/>
    <property type="molecule type" value="Genomic_RNA"/>
</dbReference>
<dbReference type="SMR" id="Q6XTB1"/>
<dbReference type="MEROPS" id="S62.001"/>
<dbReference type="GO" id="GO:0030430">
    <property type="term" value="C:host cell cytoplasm"/>
    <property type="evidence" value="ECO:0007669"/>
    <property type="project" value="UniProtKB-SubCell"/>
</dbReference>
<dbReference type="GO" id="GO:0042025">
    <property type="term" value="C:host cell nucleus"/>
    <property type="evidence" value="ECO:0007669"/>
    <property type="project" value="UniProtKB-SubCell"/>
</dbReference>
<dbReference type="GO" id="GO:0004519">
    <property type="term" value="F:endonuclease activity"/>
    <property type="evidence" value="ECO:0007669"/>
    <property type="project" value="UniProtKB-KW"/>
</dbReference>
<dbReference type="GO" id="GO:0046872">
    <property type="term" value="F:metal ion binding"/>
    <property type="evidence" value="ECO:0007669"/>
    <property type="project" value="UniProtKB-KW"/>
</dbReference>
<dbReference type="GO" id="GO:0003723">
    <property type="term" value="F:RNA binding"/>
    <property type="evidence" value="ECO:0007669"/>
    <property type="project" value="UniProtKB-UniRule"/>
</dbReference>
<dbReference type="GO" id="GO:0075526">
    <property type="term" value="P:cap snatching"/>
    <property type="evidence" value="ECO:0007669"/>
    <property type="project" value="UniProtKB-UniRule"/>
</dbReference>
<dbReference type="GO" id="GO:0006351">
    <property type="term" value="P:DNA-templated transcription"/>
    <property type="evidence" value="ECO:0007669"/>
    <property type="project" value="UniProtKB-UniRule"/>
</dbReference>
<dbReference type="GO" id="GO:0039657">
    <property type="term" value="P:symbiont-mediated suppression of host gene expression"/>
    <property type="evidence" value="ECO:0007669"/>
    <property type="project" value="UniProtKB-KW"/>
</dbReference>
<dbReference type="GO" id="GO:0039523">
    <property type="term" value="P:symbiont-mediated suppression of host mRNA transcription via inhibition of RNA polymerase II activity"/>
    <property type="evidence" value="ECO:0007669"/>
    <property type="project" value="UniProtKB-UniRule"/>
</dbReference>
<dbReference type="GO" id="GO:0039694">
    <property type="term" value="P:viral RNA genome replication"/>
    <property type="evidence" value="ECO:0007669"/>
    <property type="project" value="InterPro"/>
</dbReference>
<dbReference type="GO" id="GO:0075523">
    <property type="term" value="P:viral translational frameshifting"/>
    <property type="evidence" value="ECO:0007669"/>
    <property type="project" value="UniProtKB-KW"/>
</dbReference>
<dbReference type="FunFam" id="3.40.91.90:FF:000001">
    <property type="entry name" value="Polymerase acidic protein"/>
    <property type="match status" value="1"/>
</dbReference>
<dbReference type="Gene3D" id="3.40.91.90">
    <property type="entry name" value="Influenza RNA-dependent RNA polymerase subunit PA, endonuclease domain"/>
    <property type="match status" value="1"/>
</dbReference>
<dbReference type="HAMAP" id="MF_04063">
    <property type="entry name" value="INFV_PA"/>
    <property type="match status" value="1"/>
</dbReference>
<dbReference type="InterPro" id="IPR037534">
    <property type="entry name" value="INFV_PA"/>
</dbReference>
<dbReference type="InterPro" id="IPR001009">
    <property type="entry name" value="PA/PA-X"/>
</dbReference>
<dbReference type="InterPro" id="IPR038372">
    <property type="entry name" value="PA/PA-X_sf"/>
</dbReference>
<dbReference type="Pfam" id="PF00603">
    <property type="entry name" value="Flu_PA"/>
    <property type="match status" value="1"/>
</dbReference>
<proteinExistence type="inferred from homology"/>
<protein>
    <recommendedName>
        <fullName evidence="2">Polymerase acidic protein</fullName>
        <ecNumber evidence="2">3.1.-.-</ecNumber>
    </recommendedName>
    <alternativeName>
        <fullName evidence="2">RNA-directed RNA polymerase subunit P2</fullName>
    </alternativeName>
</protein>
<name>PA_I70A0</name>
<sequence length="716" mass="82932">MEDFVRQCFNPMIVELAEKAMKEYGEDLKIETNKFAAICTHLEVCFMYSDFHFINEQGESIVVELDDPNALLKHRFEIIEGRDRTMAWTVVNSICNTTGAEKPKFLPDLYDYKENRFIEIGVTRREVHIYYLEKANKIKSENTHIHIFSFTGEEMATKADYTLDEESRARIKTRLFTIRQEMANRGLWDSFRQSERGEETIEERFEITGTMRRLADQSLPPNFSCLENFRAYVDGFEPNGCIEGKLSQMSKEVNARIEPFLKTTPRPIRLPDGPPCFQRSKFLLMDALKLSIEDPSHEGEGIPLYDAIKCMRTFFGWKEPYIVKPHEKGINPNYLLSWKQVLAELQDIENEEKIPRTKNMKKTSQLKWALGENMAPEKVDFDNCRDISDLKQYDSDEPELRSLSSWIQNEFNKACELTDSIWIELDEIGEDVAPIEYIASMRRNYFTAEVSHCRATEYIMKGVYINTALLNASCAAMDDFQLIPMISKCRTKEGRRKTNLYGFIIKGRSHLRNDTDVVNFVSMEFSLTDPRLEPHKWEKYCVLEIGDMLLRSAIGQMSRPMFLYVRTNGTSKIKMKWGMEMRRCLLQSLQQIESMIEAESSVKEKDMTKEFFENKSETWPIGESPKGVEEGSIGKVCRTLLAKSVFNSLYASPQLEGFSAESRKLLLVVQALRDNLEPGTFDLGGLYEAIEECLINDPWVLLNASWFNSFLTHALR</sequence>
<evidence type="ECO:0000250" key="1">
    <source>
        <dbReference type="UniProtKB" id="P03433"/>
    </source>
</evidence>
<evidence type="ECO:0000255" key="2">
    <source>
        <dbReference type="HAMAP-Rule" id="MF_04063"/>
    </source>
</evidence>
<comment type="function">
    <text evidence="2">Plays an essential role in viral RNA transcription and replication by forming the heterotrimeric polymerase complex together with PB1 and PB2 subunits. The complex transcribes viral mRNAs by using a unique mechanism called cap-snatching. It consists in the hijacking and cleavage of host capped pre-mRNAs. These short capped RNAs are then used as primers for viral mRNAs. The PB2 subunit is responsible for the binding of the 5' cap of cellular pre-mRNAs which are subsequently cleaved after 10-13 nucleotides by the PA subunit that carries the endonuclease activity.</text>
</comment>
<comment type="cofactor">
    <cofactor evidence="2">
        <name>Mn(2+)</name>
        <dbReference type="ChEBI" id="CHEBI:29035"/>
    </cofactor>
    <text evidence="2">Binds 2 manganese ions per subunit.</text>
</comment>
<comment type="subunit">
    <text evidence="1 2">Influenza RNA polymerase is composed of three subunits: PB1, PB2 and PA. Interacts (via C-terminus) with PB1 (via N-terminus).</text>
</comment>
<comment type="subcellular location">
    <subcellularLocation>
        <location evidence="2">Host cytoplasm</location>
    </subcellularLocation>
    <subcellularLocation>
        <location evidence="2">Host nucleus</location>
    </subcellularLocation>
    <text evidence="1 2">PB1 and PA are transported in the host nucleus as a complex.</text>
</comment>
<comment type="alternative products">
    <event type="ribosomal frameshifting"/>
    <isoform>
        <id>Q6XTB1-1</id>
        <name>PA</name>
        <sequence type="displayed"/>
    </isoform>
    <isoform>
        <id>P0DJU0-1</id>
        <name>PA-X</name>
        <sequence type="external"/>
    </isoform>
</comment>
<comment type="PTM">
    <text evidence="1 2">Phosphorylated on serines and threonines by host kinases, including human casein kinase II.</text>
</comment>
<comment type="similarity">
    <text evidence="2">Belongs to the influenza viruses PA family.</text>
</comment>
<feature type="chain" id="PRO_0000279260" description="Polymerase acidic protein">
    <location>
        <begin position="1"/>
        <end position="716"/>
    </location>
</feature>
<feature type="short sequence motif" description="Nuclear localization signal 1 (NLS1)" evidence="1 2">
    <location>
        <begin position="124"/>
        <end position="139"/>
    </location>
</feature>
<feature type="short sequence motif" description="Nuclear localization signal 2 (NLS2)" evidence="1 2">
    <location>
        <begin position="184"/>
        <end position="247"/>
    </location>
</feature>
<feature type="binding site" evidence="2">
    <location>
        <position position="41"/>
    </location>
    <ligand>
        <name>Mn(2+)</name>
        <dbReference type="ChEBI" id="CHEBI:29035"/>
        <label>1</label>
    </ligand>
</feature>
<feature type="binding site" evidence="2">
    <location>
        <position position="80"/>
    </location>
    <ligand>
        <name>Mn(2+)</name>
        <dbReference type="ChEBI" id="CHEBI:29035"/>
        <label>2</label>
    </ligand>
</feature>
<feature type="binding site" evidence="2">
    <location>
        <position position="108"/>
    </location>
    <ligand>
        <name>Mn(2+)</name>
        <dbReference type="ChEBI" id="CHEBI:29035"/>
        <label>1</label>
    </ligand>
</feature>
<feature type="binding site" evidence="2">
    <location>
        <position position="108"/>
    </location>
    <ligand>
        <name>Mn(2+)</name>
        <dbReference type="ChEBI" id="CHEBI:29035"/>
        <label>2</label>
    </ligand>
</feature>
<feature type="binding site" evidence="2">
    <location>
        <position position="119"/>
    </location>
    <ligand>
        <name>Mn(2+)</name>
        <dbReference type="ChEBI" id="CHEBI:29035"/>
        <label>1</label>
    </ligand>
</feature>
<feature type="binding site" evidence="2">
    <location>
        <position position="120"/>
    </location>
    <ligand>
        <name>Mn(2+)</name>
        <dbReference type="ChEBI" id="CHEBI:29035"/>
        <label>1</label>
    </ligand>
</feature>
<gene>
    <name evidence="2" type="primary">PA</name>
</gene>
<organism>
    <name type="scientific">Influenza A virus (strain A/Qu/7/1970 H3N2)</name>
    <dbReference type="NCBI Taxonomy" id="221016"/>
    <lineage>
        <taxon>Viruses</taxon>
        <taxon>Riboviria</taxon>
        <taxon>Orthornavirae</taxon>
        <taxon>Negarnaviricota</taxon>
        <taxon>Polyploviricotina</taxon>
        <taxon>Insthoviricetes</taxon>
        <taxon>Articulavirales</taxon>
        <taxon>Orthomyxoviridae</taxon>
        <taxon>Alphainfluenzavirus</taxon>
        <taxon>Alphainfluenzavirus influenzae</taxon>
        <taxon>Influenza A virus</taxon>
    </lineage>
</organism>
<accession>Q6XTB1</accession>
<reference key="1">
    <citation type="journal article" date="2004" name="Virology">
        <title>Genetic analysis of human H2N2 and early H3N2 influenza viruses, 1957-1972: evidence for genetic divergence and multiple reassortment events.</title>
        <authorList>
            <person name="Lindstrom S.E."/>
            <person name="Cox N.J."/>
            <person name="Klimov A."/>
        </authorList>
    </citation>
    <scope>NUCLEOTIDE SEQUENCE [GENOMIC RNA]</scope>
</reference>